<reference key="1">
    <citation type="journal article" date="1997" name="Biochem. Biophys. Res. Commun.">
        <title>Cloning, structure, and expression of a cDNA encoding vitamin D3 25-hydroxylase.</title>
        <authorList>
            <person name="Postlind H."/>
            <person name="Axen E."/>
            <person name="Bergman T."/>
            <person name="Wikvall K."/>
        </authorList>
    </citation>
    <scope>NUCLEOTIDE SEQUENCE [MRNA]</scope>
    <scope>PROTEIN SEQUENCE OF 2-57; 249-273 AND 408-430</scope>
    <source>
        <tissue>Liver</tissue>
    </source>
</reference>
<reference key="2">
    <citation type="journal article" date="1990" name="Biochem. J.">
        <title>Characterization of pig kidney microsomal cytochrome P-450 catalysing 25-hydroxylation of vitamin D3 and C27 steroids.</title>
        <authorList>
            <person name="Bergman T."/>
            <person name="Postlind H."/>
        </authorList>
    </citation>
    <scope>PROTEIN SEQUENCE OF 2-22</scope>
    <scope>FUNCTION</scope>
    <scope>CATALYTIC ACTIVITY</scope>
    <source>
        <tissue>Kidney</tissue>
    </source>
</reference>
<reference key="3">
    <citation type="journal article" date="1992" name="Biochem. J.">
        <title>Purification and characterization of a vitamin D3 25-hydroxylase from pig liver microsomes.</title>
        <authorList>
            <person name="Axen E."/>
            <person name="Bergman T."/>
            <person name="Wikvall K."/>
        </authorList>
    </citation>
    <scope>PROTEIN SEQUENCE OF 2-17</scope>
    <scope>FUNCTION</scope>
    <scope>CATALYTIC ACTIVITY</scope>
    <source>
        <tissue>Liver</tissue>
    </source>
</reference>
<name>CP2DP_PIG</name>
<organism>
    <name type="scientific">Sus scrofa</name>
    <name type="common">Pig</name>
    <dbReference type="NCBI Taxonomy" id="9823"/>
    <lineage>
        <taxon>Eukaryota</taxon>
        <taxon>Metazoa</taxon>
        <taxon>Chordata</taxon>
        <taxon>Craniata</taxon>
        <taxon>Vertebrata</taxon>
        <taxon>Euteleostomi</taxon>
        <taxon>Mammalia</taxon>
        <taxon>Eutheria</taxon>
        <taxon>Laurasiatheria</taxon>
        <taxon>Artiodactyla</taxon>
        <taxon>Suina</taxon>
        <taxon>Suidae</taxon>
        <taxon>Sus</taxon>
    </lineage>
</organism>
<sequence length="500" mass="56512">MGLLTGDLLGILALAMVIFLLLVDLMHRRSRWAPRYPPGPMPLPGLGNLLQVNFQDPRLSFIQLRRRFGDVFSLQQIWRPVVVLNGLAAVREALVSHSHETSDRPPVFILEHLGYGPRSEGVILARYGKAWREQRRFSVSTLRNFGLGKKSLEEWVTQEASCLCAAFADQAGRPFSPNNLLNKAVSNVIASLTFARRFEYNDPRMLKLLDLVLEGLKEEVGLMRQVLEAMPVLRHIPGLCAKLFPRQKAFLVMIDELITEHKMTRDLAQPPRDLTDAFLDEMKEAKGNPESSFNDENLRLVVAHLFSAGMITTSTTLAWALLLMILHPDVQRRVQQEIDEVIGHVRQPEIKDQALMPFTLAVLHEVQRFGDIVPLGVAHMTSCDIEVQGFLIPKGTTLITNLTSVLKDETVWKKPFRFYPEHFLDAQGRFTKQEAFMPFSAGRRSCLGEPLARMELFLFFTTLLQAFSFSVPTGQPCPSDHGVFAFLLFPSPYQLCAVPR</sequence>
<keyword id="KW-0903">Direct protein sequencing</keyword>
<keyword id="KW-0256">Endoplasmic reticulum</keyword>
<keyword id="KW-0349">Heme</keyword>
<keyword id="KW-0408">Iron</keyword>
<keyword id="KW-0472">Membrane</keyword>
<keyword id="KW-0479">Metal-binding</keyword>
<keyword id="KW-0492">Microsome</keyword>
<keyword id="KW-0503">Monooxygenase</keyword>
<keyword id="KW-0560">Oxidoreductase</keyword>
<keyword id="KW-1185">Reference proteome</keyword>
<accession>O46658</accession>
<dbReference type="EC" id="1.14.14.24"/>
<dbReference type="EMBL" id="Y16417">
    <property type="protein sequence ID" value="CAA76205.1"/>
    <property type="molecule type" value="mRNA"/>
</dbReference>
<dbReference type="PIR" id="JC5819">
    <property type="entry name" value="JC5819"/>
</dbReference>
<dbReference type="RefSeq" id="NP_999559.1">
    <property type="nucleotide sequence ID" value="NM_214394.1"/>
</dbReference>
<dbReference type="SMR" id="O46658"/>
<dbReference type="FunCoup" id="O46658">
    <property type="interactions" value="117"/>
</dbReference>
<dbReference type="STRING" id="9823.ENSSSCP00000000051"/>
<dbReference type="PaxDb" id="9823-ENSSSCP00000000051"/>
<dbReference type="PeptideAtlas" id="O46658"/>
<dbReference type="GeneID" id="397687"/>
<dbReference type="KEGG" id="ssc:397687"/>
<dbReference type="CTD" id="1565"/>
<dbReference type="eggNOG" id="KOG0156">
    <property type="taxonomic scope" value="Eukaryota"/>
</dbReference>
<dbReference type="InParanoid" id="O46658"/>
<dbReference type="OrthoDB" id="3934656at2759"/>
<dbReference type="Proteomes" id="UP000008227">
    <property type="component" value="Unplaced"/>
</dbReference>
<dbReference type="Proteomes" id="UP000314985">
    <property type="component" value="Unplaced"/>
</dbReference>
<dbReference type="Proteomes" id="UP000694570">
    <property type="component" value="Unplaced"/>
</dbReference>
<dbReference type="Proteomes" id="UP000694571">
    <property type="component" value="Unplaced"/>
</dbReference>
<dbReference type="Proteomes" id="UP000694720">
    <property type="component" value="Unplaced"/>
</dbReference>
<dbReference type="Proteomes" id="UP000694722">
    <property type="component" value="Unplaced"/>
</dbReference>
<dbReference type="Proteomes" id="UP000694723">
    <property type="component" value="Unplaced"/>
</dbReference>
<dbReference type="Proteomes" id="UP000694724">
    <property type="component" value="Unplaced"/>
</dbReference>
<dbReference type="Proteomes" id="UP000694725">
    <property type="component" value="Unplaced"/>
</dbReference>
<dbReference type="Proteomes" id="UP000694726">
    <property type="component" value="Unplaced"/>
</dbReference>
<dbReference type="Proteomes" id="UP000694727">
    <property type="component" value="Unplaced"/>
</dbReference>
<dbReference type="Proteomes" id="UP000694728">
    <property type="component" value="Unplaced"/>
</dbReference>
<dbReference type="GO" id="GO:0005737">
    <property type="term" value="C:cytoplasm"/>
    <property type="evidence" value="ECO:0000318"/>
    <property type="project" value="GO_Central"/>
</dbReference>
<dbReference type="GO" id="GO:0005789">
    <property type="term" value="C:endoplasmic reticulum membrane"/>
    <property type="evidence" value="ECO:0007669"/>
    <property type="project" value="UniProtKB-SubCell"/>
</dbReference>
<dbReference type="GO" id="GO:0043231">
    <property type="term" value="C:intracellular membrane-bounded organelle"/>
    <property type="evidence" value="ECO:0000318"/>
    <property type="project" value="GO_Central"/>
</dbReference>
<dbReference type="GO" id="GO:0047748">
    <property type="term" value="F:cholestanetetraol 26-dehydrogenase activity"/>
    <property type="evidence" value="ECO:0007669"/>
    <property type="project" value="UniProtKB-EC"/>
</dbReference>
<dbReference type="GO" id="GO:0020037">
    <property type="term" value="F:heme binding"/>
    <property type="evidence" value="ECO:0000318"/>
    <property type="project" value="GO_Central"/>
</dbReference>
<dbReference type="GO" id="GO:0005506">
    <property type="term" value="F:iron ion binding"/>
    <property type="evidence" value="ECO:0007669"/>
    <property type="project" value="InterPro"/>
</dbReference>
<dbReference type="GO" id="GO:0016712">
    <property type="term" value="F:oxidoreductase activity, acting on paired donors, with incorporation or reduction of molecular oxygen, reduced flavin or flavoprotein as one donor, and incorporation of one atom of oxygen"/>
    <property type="evidence" value="ECO:0000318"/>
    <property type="project" value="GO_Central"/>
</dbReference>
<dbReference type="GO" id="GO:0030343">
    <property type="term" value="F:vitamin D3 25-hydroxylase activity"/>
    <property type="evidence" value="ECO:0007669"/>
    <property type="project" value="RHEA"/>
</dbReference>
<dbReference type="GO" id="GO:0019369">
    <property type="term" value="P:arachidonate metabolic process"/>
    <property type="evidence" value="ECO:0000318"/>
    <property type="project" value="GO_Central"/>
</dbReference>
<dbReference type="GO" id="GO:0006805">
    <property type="term" value="P:xenobiotic metabolic process"/>
    <property type="evidence" value="ECO:0000318"/>
    <property type="project" value="GO_Central"/>
</dbReference>
<dbReference type="CDD" id="cd20663">
    <property type="entry name" value="CYP2D"/>
    <property type="match status" value="1"/>
</dbReference>
<dbReference type="FunFam" id="1.10.630.10:FF:000004">
    <property type="entry name" value="cytochrome P450 2D15 isoform X1"/>
    <property type="match status" value="1"/>
</dbReference>
<dbReference type="Gene3D" id="1.10.630.10">
    <property type="entry name" value="Cytochrome P450"/>
    <property type="match status" value="1"/>
</dbReference>
<dbReference type="InterPro" id="IPR001128">
    <property type="entry name" value="Cyt_P450"/>
</dbReference>
<dbReference type="InterPro" id="IPR017972">
    <property type="entry name" value="Cyt_P450_CS"/>
</dbReference>
<dbReference type="InterPro" id="IPR002401">
    <property type="entry name" value="Cyt_P450_E_grp-I"/>
</dbReference>
<dbReference type="InterPro" id="IPR008069">
    <property type="entry name" value="Cyt_P450_E_grp-I_CYP2D-like"/>
</dbReference>
<dbReference type="InterPro" id="IPR036396">
    <property type="entry name" value="Cyt_P450_sf"/>
</dbReference>
<dbReference type="InterPro" id="IPR050182">
    <property type="entry name" value="Cytochrome_P450_fam2"/>
</dbReference>
<dbReference type="PANTHER" id="PTHR24300:SF1">
    <property type="entry name" value="CYTOCHROME P450 2D6-RELATED"/>
    <property type="match status" value="1"/>
</dbReference>
<dbReference type="PANTHER" id="PTHR24300">
    <property type="entry name" value="CYTOCHROME P450 508A4-RELATED"/>
    <property type="match status" value="1"/>
</dbReference>
<dbReference type="Pfam" id="PF00067">
    <property type="entry name" value="p450"/>
    <property type="match status" value="1"/>
</dbReference>
<dbReference type="PRINTS" id="PR00463">
    <property type="entry name" value="EP450I"/>
</dbReference>
<dbReference type="PRINTS" id="PR01686">
    <property type="entry name" value="EP450ICYP2D"/>
</dbReference>
<dbReference type="PRINTS" id="PR00385">
    <property type="entry name" value="P450"/>
</dbReference>
<dbReference type="SUPFAM" id="SSF48264">
    <property type="entry name" value="Cytochrome P450"/>
    <property type="match status" value="1"/>
</dbReference>
<dbReference type="PROSITE" id="PS00086">
    <property type="entry name" value="CYTOCHROME_P450"/>
    <property type="match status" value="1"/>
</dbReference>
<proteinExistence type="evidence at protein level"/>
<feature type="initiator methionine" description="Removed" evidence="2 4">
    <location>
        <position position="1"/>
    </location>
</feature>
<feature type="chain" id="PRO_0000051745" description="Vitamin D(3) 25-hydroxylase">
    <location>
        <begin position="2"/>
        <end position="500"/>
    </location>
</feature>
<feature type="binding site" description="axial binding residue" evidence="1">
    <location>
        <position position="446"/>
    </location>
    <ligand>
        <name>heme</name>
        <dbReference type="ChEBI" id="CHEBI:30413"/>
    </ligand>
    <ligandPart>
        <name>Fe</name>
        <dbReference type="ChEBI" id="CHEBI:18248"/>
    </ligandPart>
</feature>
<gene>
    <name type="primary">CYP2D25</name>
</gene>
<comment type="function">
    <text evidence="2 3">Catalyzes the 25-hydroxylation of vitamin D(3) (calciol), 1alpha-hydroxyvitamin D(3) (alphacalcidiol) and some C27 steroids. In addition the enzyme catalyzes the hydroxylation of positions 11 and 12 of dodecanoate.</text>
</comment>
<comment type="catalytic activity">
    <reaction evidence="2 3">
        <text>calciol + reduced [NADPH--hemoprotein reductase] + O2 = calcidiol + oxidized [NADPH--hemoprotein reductase] + H2O + H(+)</text>
        <dbReference type="Rhea" id="RHEA:32903"/>
        <dbReference type="Rhea" id="RHEA-COMP:11964"/>
        <dbReference type="Rhea" id="RHEA-COMP:11965"/>
        <dbReference type="ChEBI" id="CHEBI:15377"/>
        <dbReference type="ChEBI" id="CHEBI:15378"/>
        <dbReference type="ChEBI" id="CHEBI:15379"/>
        <dbReference type="ChEBI" id="CHEBI:17933"/>
        <dbReference type="ChEBI" id="CHEBI:28940"/>
        <dbReference type="ChEBI" id="CHEBI:57618"/>
        <dbReference type="ChEBI" id="CHEBI:58210"/>
        <dbReference type="EC" id="1.14.14.24"/>
    </reaction>
</comment>
<comment type="catalytic activity">
    <reaction evidence="2 3">
        <text>alfacalcidol + reduced [NADPH--hemoprotein reductase] + O2 = calcitriol + oxidized [NADPH--hemoprotein reductase] + H2O + H(+)</text>
        <dbReference type="Rhea" id="RHEA:49272"/>
        <dbReference type="Rhea" id="RHEA-COMP:11964"/>
        <dbReference type="Rhea" id="RHEA-COMP:11965"/>
        <dbReference type="ChEBI" id="CHEBI:15377"/>
        <dbReference type="ChEBI" id="CHEBI:15378"/>
        <dbReference type="ChEBI" id="CHEBI:15379"/>
        <dbReference type="ChEBI" id="CHEBI:17823"/>
        <dbReference type="ChEBI" id="CHEBI:31186"/>
        <dbReference type="ChEBI" id="CHEBI:57618"/>
        <dbReference type="ChEBI" id="CHEBI:58210"/>
    </reaction>
</comment>
<comment type="catalytic activity">
    <reaction evidence="2 3">
        <text>dodecanoate + reduced [NADPH--hemoprotein reductase] + O2 = 12-hydroxydodecanoate + oxidized [NADPH--hemoprotein reductase] + H2O + H(+)</text>
        <dbReference type="Rhea" id="RHEA:38947"/>
        <dbReference type="Rhea" id="RHEA-COMP:11964"/>
        <dbReference type="Rhea" id="RHEA-COMP:11965"/>
        <dbReference type="ChEBI" id="CHEBI:15377"/>
        <dbReference type="ChEBI" id="CHEBI:15378"/>
        <dbReference type="ChEBI" id="CHEBI:15379"/>
        <dbReference type="ChEBI" id="CHEBI:18262"/>
        <dbReference type="ChEBI" id="CHEBI:36204"/>
        <dbReference type="ChEBI" id="CHEBI:57618"/>
        <dbReference type="ChEBI" id="CHEBI:58210"/>
    </reaction>
</comment>
<comment type="catalytic activity">
    <reaction evidence="2 3">
        <text>dodecanoate + reduced [NADPH--hemoprotein reductase] + O2 = 11-hydroxydodecanoate + oxidized [NADPH--hemoprotein reductase] + H2O + H(+)</text>
        <dbReference type="Rhea" id="RHEA:39751"/>
        <dbReference type="Rhea" id="RHEA-COMP:11964"/>
        <dbReference type="Rhea" id="RHEA-COMP:11965"/>
        <dbReference type="ChEBI" id="CHEBI:15377"/>
        <dbReference type="ChEBI" id="CHEBI:15378"/>
        <dbReference type="ChEBI" id="CHEBI:15379"/>
        <dbReference type="ChEBI" id="CHEBI:18262"/>
        <dbReference type="ChEBI" id="CHEBI:57618"/>
        <dbReference type="ChEBI" id="CHEBI:58210"/>
        <dbReference type="ChEBI" id="CHEBI:76628"/>
    </reaction>
</comment>
<comment type="catalytic activity">
    <reaction evidence="2 3">
        <text>5beta-cholestane-3alpha,7alpha-diol + reduced [NADPH--hemoprotein reductase] + O2 = 5beta-cholestane-3alpha,7alpha,25-triol + oxidized [NADPH--hemoprotein reductase] + H2O + H(+)</text>
        <dbReference type="Rhea" id="RHEA:67384"/>
        <dbReference type="Rhea" id="RHEA-COMP:11964"/>
        <dbReference type="Rhea" id="RHEA-COMP:11965"/>
        <dbReference type="ChEBI" id="CHEBI:15377"/>
        <dbReference type="ChEBI" id="CHEBI:15378"/>
        <dbReference type="ChEBI" id="CHEBI:15379"/>
        <dbReference type="ChEBI" id="CHEBI:28047"/>
        <dbReference type="ChEBI" id="CHEBI:57618"/>
        <dbReference type="ChEBI" id="CHEBI:58210"/>
        <dbReference type="ChEBI" id="CHEBI:169972"/>
    </reaction>
</comment>
<comment type="catalytic activity">
    <reaction evidence="2 3">
        <text>5beta-cholestane-3alpha,7alpha,12alpha-triol + reduced [NADPH--hemoprotein reductase] + O2 = 5beta-cholestane-3alpha,7alpha,12alpha,25-tetrol + oxidized [NADPH--hemoprotein reductase] + H2O + H(+)</text>
        <dbReference type="Rhea" id="RHEA:67396"/>
        <dbReference type="Rhea" id="RHEA-COMP:11964"/>
        <dbReference type="Rhea" id="RHEA-COMP:11965"/>
        <dbReference type="ChEBI" id="CHEBI:15377"/>
        <dbReference type="ChEBI" id="CHEBI:15378"/>
        <dbReference type="ChEBI" id="CHEBI:15379"/>
        <dbReference type="ChEBI" id="CHEBI:16496"/>
        <dbReference type="ChEBI" id="CHEBI:57618"/>
        <dbReference type="ChEBI" id="CHEBI:58210"/>
        <dbReference type="ChEBI" id="CHEBI:169973"/>
    </reaction>
</comment>
<comment type="cofactor">
    <cofactor evidence="1">
        <name>heme</name>
        <dbReference type="ChEBI" id="CHEBI:30413"/>
    </cofactor>
</comment>
<comment type="subcellular location">
    <subcellularLocation>
        <location>Endoplasmic reticulum membrane</location>
        <topology>Peripheral membrane protein</topology>
    </subcellularLocation>
    <subcellularLocation>
        <location>Microsome membrane</location>
        <topology>Peripheral membrane protein</topology>
    </subcellularLocation>
</comment>
<comment type="tissue specificity">
    <text evidence="4">Found in liver and kidney.</text>
</comment>
<comment type="similarity">
    <text evidence="5">Belongs to the cytochrome P450 family.</text>
</comment>
<evidence type="ECO:0000250" key="1"/>
<evidence type="ECO:0000269" key="2">
    <source>
    </source>
</evidence>
<evidence type="ECO:0000269" key="3">
    <source>
    </source>
</evidence>
<evidence type="ECO:0000269" key="4">
    <source>
    </source>
</evidence>
<evidence type="ECO:0000305" key="5"/>
<protein>
    <recommendedName>
        <fullName>Vitamin D(3) 25-hydroxylase</fullName>
        <ecNumber>1.14.14.24</ecNumber>
    </recommendedName>
    <alternativeName>
        <fullName>CYPIID25</fullName>
    </alternativeName>
    <alternativeName>
        <fullName>Cytochrome P450 2D25</fullName>
    </alternativeName>
</protein>